<proteinExistence type="evidence at transcript level"/>
<evidence type="ECO:0000250" key="1"/>
<evidence type="ECO:0000255" key="2">
    <source>
        <dbReference type="PROSITE-ProRule" id="PRU00033"/>
    </source>
</evidence>
<evidence type="ECO:0000255" key="3">
    <source>
        <dbReference type="PROSITE-ProRule" id="PRU00216"/>
    </source>
</evidence>
<evidence type="ECO:0000256" key="4">
    <source>
        <dbReference type="SAM" id="MobiDB-lite"/>
    </source>
</evidence>
<evidence type="ECO:0000269" key="5">
    <source>
    </source>
</evidence>
<evidence type="ECO:0000305" key="6"/>
<gene>
    <name type="primary">REV1</name>
</gene>
<name>REV1_CHICK</name>
<reference key="1">
    <citation type="journal article" date="2005" name="Mol. Cell. Biol.">
        <title>Multiple roles of vertebrate REV genes in DNA repair and recombination.</title>
        <authorList>
            <person name="Okada T."/>
            <person name="Sonoda E."/>
            <person name="Yoshimura M."/>
            <person name="Kawano Y."/>
            <person name="Saya H."/>
            <person name="Kohzaki M."/>
            <person name="Takeda S."/>
        </authorList>
    </citation>
    <scope>NUCLEOTIDE SEQUENCE [MRNA]</scope>
    <scope>FUNCTION</scope>
</reference>
<organism>
    <name type="scientific">Gallus gallus</name>
    <name type="common">Chicken</name>
    <dbReference type="NCBI Taxonomy" id="9031"/>
    <lineage>
        <taxon>Eukaryota</taxon>
        <taxon>Metazoa</taxon>
        <taxon>Chordata</taxon>
        <taxon>Craniata</taxon>
        <taxon>Vertebrata</taxon>
        <taxon>Euteleostomi</taxon>
        <taxon>Archelosauria</taxon>
        <taxon>Archosauria</taxon>
        <taxon>Dinosauria</taxon>
        <taxon>Saurischia</taxon>
        <taxon>Theropoda</taxon>
        <taxon>Coelurosauria</taxon>
        <taxon>Aves</taxon>
        <taxon>Neognathae</taxon>
        <taxon>Galloanserae</taxon>
        <taxon>Galliformes</taxon>
        <taxon>Phasianidae</taxon>
        <taxon>Phasianinae</taxon>
        <taxon>Gallus</taxon>
    </lineage>
</organism>
<dbReference type="EC" id="2.7.7.-"/>
<dbReference type="EMBL" id="AY675169">
    <property type="protein sequence ID" value="AAV80844.1"/>
    <property type="molecule type" value="mRNA"/>
</dbReference>
<dbReference type="RefSeq" id="NP_001025982.2">
    <property type="nucleotide sequence ID" value="NM_001030811.2"/>
</dbReference>
<dbReference type="SMR" id="Q4KWZ7"/>
<dbReference type="BioGRID" id="679901">
    <property type="interactions" value="1"/>
</dbReference>
<dbReference type="FunCoup" id="Q4KWZ7">
    <property type="interactions" value="2232"/>
</dbReference>
<dbReference type="STRING" id="9031.ENSGALP00000066817"/>
<dbReference type="GlyGen" id="Q4KWZ7">
    <property type="glycosylation" value="1 site"/>
</dbReference>
<dbReference type="PaxDb" id="9031-ENSGALP00000027018"/>
<dbReference type="GeneID" id="418703"/>
<dbReference type="KEGG" id="gga:418703"/>
<dbReference type="CTD" id="51455"/>
<dbReference type="VEuPathDB" id="HostDB:geneid_418703"/>
<dbReference type="eggNOG" id="KOG2093">
    <property type="taxonomic scope" value="Eukaryota"/>
</dbReference>
<dbReference type="InParanoid" id="Q4KWZ7"/>
<dbReference type="OrthoDB" id="427711at2759"/>
<dbReference type="PhylomeDB" id="Q4KWZ7"/>
<dbReference type="Reactome" id="R-GGA-353503">
    <property type="pathway name" value="Translesion synthesis by Pol kappa"/>
</dbReference>
<dbReference type="PRO" id="PR:Q4KWZ7"/>
<dbReference type="Proteomes" id="UP000000539">
    <property type="component" value="Unassembled WGS sequence"/>
</dbReference>
<dbReference type="GO" id="GO:0005654">
    <property type="term" value="C:nucleoplasm"/>
    <property type="evidence" value="ECO:0000304"/>
    <property type="project" value="Reactome"/>
</dbReference>
<dbReference type="GO" id="GO:0003684">
    <property type="term" value="F:damaged DNA binding"/>
    <property type="evidence" value="ECO:0007669"/>
    <property type="project" value="InterPro"/>
</dbReference>
<dbReference type="GO" id="GO:0017125">
    <property type="term" value="F:deoxycytidyl transferase activity"/>
    <property type="evidence" value="ECO:0000318"/>
    <property type="project" value="GO_Central"/>
</dbReference>
<dbReference type="GO" id="GO:0003887">
    <property type="term" value="F:DNA-directed DNA polymerase activity"/>
    <property type="evidence" value="ECO:0000318"/>
    <property type="project" value="GO_Central"/>
</dbReference>
<dbReference type="GO" id="GO:0046872">
    <property type="term" value="F:metal ion binding"/>
    <property type="evidence" value="ECO:0007669"/>
    <property type="project" value="UniProtKB-KW"/>
</dbReference>
<dbReference type="GO" id="GO:0006302">
    <property type="term" value="P:double-strand break repair"/>
    <property type="evidence" value="ECO:0000315"/>
    <property type="project" value="UniProtKB"/>
</dbReference>
<dbReference type="GO" id="GO:0070987">
    <property type="term" value="P:error-free translesion synthesis"/>
    <property type="evidence" value="ECO:0000318"/>
    <property type="project" value="GO_Central"/>
</dbReference>
<dbReference type="GO" id="GO:0042276">
    <property type="term" value="P:error-prone translesion synthesis"/>
    <property type="evidence" value="ECO:0000318"/>
    <property type="project" value="GO_Central"/>
</dbReference>
<dbReference type="GO" id="GO:0002206">
    <property type="term" value="P:gene conversion of immunoglobulin genes"/>
    <property type="evidence" value="ECO:0000315"/>
    <property type="project" value="UniProtKB"/>
</dbReference>
<dbReference type="CDD" id="cd17719">
    <property type="entry name" value="BRCT_Rev1"/>
    <property type="match status" value="1"/>
</dbReference>
<dbReference type="CDD" id="cd01701">
    <property type="entry name" value="PolY_Rev1"/>
    <property type="match status" value="1"/>
</dbReference>
<dbReference type="CDD" id="cd12145">
    <property type="entry name" value="Rev1_C"/>
    <property type="match status" value="1"/>
</dbReference>
<dbReference type="CDD" id="cd19318">
    <property type="entry name" value="Rev1_UBM2"/>
    <property type="match status" value="2"/>
</dbReference>
<dbReference type="FunFam" id="1.10.150.20:FF:000025">
    <property type="entry name" value="DNA repair protein REV1"/>
    <property type="match status" value="1"/>
</dbReference>
<dbReference type="FunFam" id="1.20.58.1280:FF:000001">
    <property type="entry name" value="DNA repair protein REV1"/>
    <property type="match status" value="1"/>
</dbReference>
<dbReference type="FunFam" id="3.30.1490.100:FF:000001">
    <property type="entry name" value="DNA repair protein REV1"/>
    <property type="match status" value="1"/>
</dbReference>
<dbReference type="FunFam" id="3.30.70.270:FF:000005">
    <property type="entry name" value="DNA repair protein REV1"/>
    <property type="match status" value="1"/>
</dbReference>
<dbReference type="FunFam" id="3.30.70.270:FF:000010">
    <property type="entry name" value="DNA repair protein REV1"/>
    <property type="match status" value="1"/>
</dbReference>
<dbReference type="FunFam" id="3.40.1170.60:FF:000005">
    <property type="entry name" value="DNA repair protein REV1"/>
    <property type="match status" value="1"/>
</dbReference>
<dbReference type="FunFam" id="3.40.50.10190:FF:000009">
    <property type="entry name" value="DNA repair protein REV1"/>
    <property type="match status" value="1"/>
</dbReference>
<dbReference type="Gene3D" id="3.30.70.270">
    <property type="match status" value="2"/>
</dbReference>
<dbReference type="Gene3D" id="3.40.1170.60">
    <property type="match status" value="1"/>
</dbReference>
<dbReference type="Gene3D" id="6.10.250.1490">
    <property type="match status" value="1"/>
</dbReference>
<dbReference type="Gene3D" id="6.10.250.1630">
    <property type="match status" value="1"/>
</dbReference>
<dbReference type="Gene3D" id="1.10.150.20">
    <property type="entry name" value="5' to 3' exonuclease, C-terminal subdomain"/>
    <property type="match status" value="1"/>
</dbReference>
<dbReference type="Gene3D" id="3.40.50.10190">
    <property type="entry name" value="BRCT domain"/>
    <property type="match status" value="1"/>
</dbReference>
<dbReference type="Gene3D" id="3.30.1490.100">
    <property type="entry name" value="DNA polymerase, Y-family, little finger domain"/>
    <property type="match status" value="1"/>
</dbReference>
<dbReference type="Gene3D" id="1.20.58.1280">
    <property type="entry name" value="DNA repair protein Rev1, C-terminal domain"/>
    <property type="match status" value="1"/>
</dbReference>
<dbReference type="InterPro" id="IPR001357">
    <property type="entry name" value="BRCT_dom"/>
</dbReference>
<dbReference type="InterPro" id="IPR036420">
    <property type="entry name" value="BRCT_dom_sf"/>
</dbReference>
<dbReference type="InterPro" id="IPR043502">
    <property type="entry name" value="DNA/RNA_pol_sf"/>
</dbReference>
<dbReference type="InterPro" id="IPR036775">
    <property type="entry name" value="DNA_pol_Y-fam_lit_finger_sf"/>
</dbReference>
<dbReference type="InterPro" id="IPR017961">
    <property type="entry name" value="DNA_pol_Y-fam_little_finger"/>
</dbReference>
<dbReference type="InterPro" id="IPR025527">
    <property type="entry name" value="HUWE1/Rev1_UBM"/>
</dbReference>
<dbReference type="InterPro" id="IPR053848">
    <property type="entry name" value="IMS_HHH_1"/>
</dbReference>
<dbReference type="InterPro" id="IPR012112">
    <property type="entry name" value="REV1"/>
</dbReference>
<dbReference type="InterPro" id="IPR031991">
    <property type="entry name" value="Rev1_C"/>
</dbReference>
<dbReference type="InterPro" id="IPR038401">
    <property type="entry name" value="Rev1_C_sf"/>
</dbReference>
<dbReference type="InterPro" id="IPR047346">
    <property type="entry name" value="Rev1_UBM1/2"/>
</dbReference>
<dbReference type="InterPro" id="IPR043128">
    <property type="entry name" value="Rev_trsase/Diguanyl_cyclase"/>
</dbReference>
<dbReference type="InterPro" id="IPR001126">
    <property type="entry name" value="UmuC"/>
</dbReference>
<dbReference type="PANTHER" id="PTHR45990">
    <property type="entry name" value="DNA REPAIR PROTEIN REV1"/>
    <property type="match status" value="1"/>
</dbReference>
<dbReference type="PANTHER" id="PTHR45990:SF1">
    <property type="entry name" value="DNA REPAIR PROTEIN REV1"/>
    <property type="match status" value="1"/>
</dbReference>
<dbReference type="Pfam" id="PF00533">
    <property type="entry name" value="BRCT"/>
    <property type="match status" value="1"/>
</dbReference>
<dbReference type="Pfam" id="PF00817">
    <property type="entry name" value="IMS"/>
    <property type="match status" value="2"/>
</dbReference>
<dbReference type="Pfam" id="PF11799">
    <property type="entry name" value="IMS_C"/>
    <property type="match status" value="1"/>
</dbReference>
<dbReference type="Pfam" id="PF21999">
    <property type="entry name" value="IMS_HHH_1"/>
    <property type="match status" value="1"/>
</dbReference>
<dbReference type="Pfam" id="PF16727">
    <property type="entry name" value="REV1_C"/>
    <property type="match status" value="1"/>
</dbReference>
<dbReference type="Pfam" id="PF14377">
    <property type="entry name" value="UBM"/>
    <property type="match status" value="2"/>
</dbReference>
<dbReference type="PIRSF" id="PIRSF036573">
    <property type="entry name" value="REV1"/>
    <property type="match status" value="1"/>
</dbReference>
<dbReference type="SMART" id="SM00292">
    <property type="entry name" value="BRCT"/>
    <property type="match status" value="1"/>
</dbReference>
<dbReference type="SUPFAM" id="SSF52113">
    <property type="entry name" value="BRCT domain"/>
    <property type="match status" value="1"/>
</dbReference>
<dbReference type="SUPFAM" id="SSF56672">
    <property type="entry name" value="DNA/RNA polymerases"/>
    <property type="match status" value="1"/>
</dbReference>
<dbReference type="SUPFAM" id="SSF100879">
    <property type="entry name" value="Lesion bypass DNA polymerase (Y-family), little finger domain"/>
    <property type="match status" value="1"/>
</dbReference>
<dbReference type="PROSITE" id="PS50172">
    <property type="entry name" value="BRCT"/>
    <property type="match status" value="1"/>
</dbReference>
<dbReference type="PROSITE" id="PS50173">
    <property type="entry name" value="UMUC"/>
    <property type="match status" value="1"/>
</dbReference>
<keyword id="KW-0227">DNA damage</keyword>
<keyword id="KW-0234">DNA repair</keyword>
<keyword id="KW-0237">DNA synthesis</keyword>
<keyword id="KW-0238">DNA-binding</keyword>
<keyword id="KW-0460">Magnesium</keyword>
<keyword id="KW-0479">Metal-binding</keyword>
<keyword id="KW-0548">Nucleotidyltransferase</keyword>
<keyword id="KW-0539">Nucleus</keyword>
<keyword id="KW-1185">Reference proteome</keyword>
<keyword id="KW-0808">Transferase</keyword>
<comment type="function">
    <text evidence="1 5">Deoxycytidyl transferase involved in DNA repair. Transfers a dCMP residue from dCTP to the 3'-end of a DNA primer in a template-dependent reaction. May assist in the first step in the bypass of abasic lesions by the insertion of a nucleotide opposite the lesion. Required for normal induction of mutations by physical and chemical agents (By similarity). May play a role in homologous recombination and immunoglobulin gene conversion.</text>
</comment>
<comment type="subunit">
    <text evidence="1">Monomer.</text>
</comment>
<comment type="subcellular location">
    <subcellularLocation>
        <location evidence="1">Nucleus</location>
    </subcellularLocation>
</comment>
<comment type="domain">
    <text evidence="1">The C-terminal domain is necessary for protein interactions.</text>
</comment>
<comment type="similarity">
    <text evidence="6">Belongs to the DNA polymerase type-Y family.</text>
</comment>
<protein>
    <recommendedName>
        <fullName>DNA repair protein REV1</fullName>
        <ecNumber>2.7.7.-</ecNumber>
    </recommendedName>
    <alternativeName>
        <fullName>Rev1-like terminal deoxycytidyl transferase</fullName>
    </alternativeName>
</protein>
<feature type="chain" id="PRO_0000405249" description="DNA repair protein REV1">
    <location>
        <begin position="1"/>
        <end position="1255"/>
    </location>
</feature>
<feature type="domain" description="BRCT" evidence="2">
    <location>
        <begin position="47"/>
        <end position="134"/>
    </location>
</feature>
<feature type="domain" description="UmuC" evidence="3">
    <location>
        <begin position="423"/>
        <end position="664"/>
    </location>
</feature>
<feature type="region of interest" description="Disordered" evidence="4">
    <location>
        <begin position="287"/>
        <end position="348"/>
    </location>
</feature>
<feature type="region of interest" description="Interaction with target DNA" evidence="1">
    <location>
        <begin position="357"/>
        <end position="367"/>
    </location>
</feature>
<feature type="region of interest" description="Interaction with target DNA" evidence="1">
    <location>
        <begin position="664"/>
        <end position="667"/>
    </location>
</feature>
<feature type="region of interest" description="Interaction with target DNA" evidence="1">
    <location>
        <begin position="720"/>
        <end position="728"/>
    </location>
</feature>
<feature type="region of interest" description="Disordered" evidence="4">
    <location>
        <begin position="1073"/>
        <end position="1114"/>
    </location>
</feature>
<feature type="region of interest" description="Disordered" evidence="4">
    <location>
        <begin position="1134"/>
        <end position="1153"/>
    </location>
</feature>
<feature type="region of interest" description="Protein interaction domain" evidence="1">
    <location>
        <begin position="1156"/>
        <end position="1255"/>
    </location>
</feature>
<feature type="short sequence motif" description="Nuclear localization signal" evidence="1">
    <location>
        <begin position="1079"/>
        <end position="1085"/>
    </location>
</feature>
<feature type="compositionally biased region" description="Polar residues" evidence="4">
    <location>
        <begin position="287"/>
        <end position="300"/>
    </location>
</feature>
<feature type="compositionally biased region" description="Low complexity" evidence="4">
    <location>
        <begin position="301"/>
        <end position="312"/>
    </location>
</feature>
<feature type="compositionally biased region" description="Polar residues" evidence="4">
    <location>
        <begin position="313"/>
        <end position="325"/>
    </location>
</feature>
<feature type="compositionally biased region" description="Low complexity" evidence="4">
    <location>
        <begin position="326"/>
        <end position="339"/>
    </location>
</feature>
<feature type="compositionally biased region" description="Basic residues" evidence="4">
    <location>
        <begin position="1073"/>
        <end position="1085"/>
    </location>
</feature>
<feature type="compositionally biased region" description="Polar residues" evidence="4">
    <location>
        <begin position="1137"/>
        <end position="1153"/>
    </location>
</feature>
<feature type="binding site" evidence="1">
    <location>
        <position position="362"/>
    </location>
    <ligand>
        <name>dCTP</name>
        <dbReference type="ChEBI" id="CHEBI:61481"/>
    </ligand>
</feature>
<feature type="binding site" evidence="1">
    <location>
        <begin position="427"/>
        <end position="431"/>
    </location>
    <ligand>
        <name>dCTP</name>
        <dbReference type="ChEBI" id="CHEBI:61481"/>
    </ligand>
</feature>
<feature type="binding site" evidence="3">
    <location>
        <position position="427"/>
    </location>
    <ligand>
        <name>Mg(2+)</name>
        <dbReference type="ChEBI" id="CHEBI:18420"/>
        <label>1</label>
    </ligand>
</feature>
<feature type="binding site" evidence="3">
    <location>
        <position position="427"/>
    </location>
    <ligand>
        <name>Mg(2+)</name>
        <dbReference type="ChEBI" id="CHEBI:18420"/>
        <label>2</label>
    </ligand>
</feature>
<feature type="binding site" evidence="3">
    <location>
        <position position="427"/>
    </location>
    <ligand>
        <name>Mg(2+)</name>
        <dbReference type="ChEBI" id="CHEBI:18420"/>
    </ligand>
</feature>
<feature type="binding site" evidence="1">
    <location>
        <begin position="521"/>
        <end position="527"/>
    </location>
    <ligand>
        <name>dCTP</name>
        <dbReference type="ChEBI" id="CHEBI:61481"/>
    </ligand>
</feature>
<feature type="binding site" evidence="1">
    <location>
        <position position="533"/>
    </location>
    <ligand>
        <name>dCTP</name>
        <dbReference type="ChEBI" id="CHEBI:61481"/>
    </ligand>
</feature>
<feature type="binding site" evidence="1">
    <location>
        <position position="581"/>
    </location>
    <ligand>
        <name>dCTP</name>
        <dbReference type="ChEBI" id="CHEBI:61481"/>
    </ligand>
</feature>
<feature type="binding site" evidence="3">
    <location>
        <position position="581"/>
    </location>
    <ligand>
        <name>Mg(2+)</name>
        <dbReference type="ChEBI" id="CHEBI:18420"/>
        <label>1</label>
    </ligand>
</feature>
<feature type="binding site" evidence="3">
    <location>
        <position position="581"/>
    </location>
    <ligand>
        <name>Mg(2+)</name>
        <dbReference type="ChEBI" id="CHEBI:18420"/>
    </ligand>
</feature>
<feature type="binding site" evidence="3">
    <location>
        <position position="582"/>
    </location>
    <ligand>
        <name>Mg(2+)</name>
        <dbReference type="ChEBI" id="CHEBI:18420"/>
        <label>1</label>
    </ligand>
</feature>
<feature type="site" description="Interaction with target DNA" evidence="1">
    <location>
        <position position="781"/>
    </location>
</feature>
<feature type="site" description="Interaction with target DNA" evidence="1">
    <location>
        <position position="794"/>
    </location>
</feature>
<accession>Q4KWZ7</accession>
<sequence length="1255" mass="138065">MRRGGWRKRAGEGDGWGGWGGYMSAKVKKLEDQFRSDSAIQHQRDGNSSSIFSGVAIYVNGFTDPSADELRRLMMLHGGQYHVYYSRSKTTHIIATNLPNAKIKELKGEKVVRPEWIVESIKAGRLLSHIPYQLYTKQSSVQKGLSFNSICKPEDAMPGPSNIAKDLNRVNHIKQCEMESEITPNGISSWNEEEEEDSDGLGFTKLDQILPERKQNGIQSHKDSTAIFNGHTHNTCISALKTQDCLVPSSNSVASRFSPGPVQEEGKPEKGIVDFRDCTMQQLQQSNKNTDFSWNPHRTMSNSSSSSSLHSNTKINGAHHSTVQGPSSTKSTSVPTPSKAASLSVSKPSDCSFISDFYSRSRLHHISTWKCELTEFVNSLQRKNSGVFPGREKLKKWKAGRSALKTDTGNVSVASSAKPQSCIMHVDMDCFFVSVAIRNRPDLKGKPVAVTSNRGAGKAPLRPGANPQLEWQYYQNKLLNGKAEIRIPDKLDSLVWEHSDSAHMNGVDCDLTVLSMAEIASCSYEARQAGIKNGMFFGQAKKLCPNLQAVSYDFNAYKEVAQTVYEILASYTHNIEAVSCDEALVDITEILTETRLTPDELANAIRDEIKAQTKCTASVGMGSNILLARMATRKAKPDGQYHLKPEEVDDFIRGQLVTNLPGVGRSMESKLASLGIRTCGDLQCASMSKLQKEFGPKTGQMLYRFCRGLDDRPVRTEKERKSVSAEINYGIRFTQPKEAEAFLLSLSEEIQRRLEAAGMKGKRLTLKIMVRKAGAPVEPAKYGGHGICDNIARTVTLDHATDSAKVIGKETLNMFHTMKLNISDMRGVGIQVQQLVPISKTTSAQSAVQSGRLPGGSHSVIDLLHVQKAKKCSEEEHKEVFVAAMDLEISSDSRTCTVLPSRGTHLTAGLNSNVSKTDSAVKLNGLHSPISVKSRLNLSIEVPSASQLDKSVLEALPPDLREQVEQIYTIQQGETYGDSKREPINGCNTALLSQPVGTVLLQVPELQEPNANMGINVIALPAFSQVDPEVFAALPAELQAELKDAYDQRQKQPEQQPANAFVSKNPCLQLKHATTKNKKKIRKKNPVSPVKKIQSPLKNKLLGSPAKNMPAASGSPQKLIDGFLKQEGAAAQLEAVPSTSDASDPSALQTEQCGSFRPQAPNLAGAVEFNDVKTLLKEWITTISDPMEEDILQVVKYCTDLIEEKDLEKLDLVVKYMKRLMQSSVESVWNMAFDFILDNVQVVLQQTYGSTLKVI</sequence>